<dbReference type="EMBL" id="U00090">
    <property type="protein sequence ID" value="AAB91950.1"/>
    <property type="molecule type" value="Genomic_DNA"/>
</dbReference>
<dbReference type="RefSeq" id="NP_444163.1">
    <property type="nucleotide sequence ID" value="NC_000914.2"/>
</dbReference>
<dbReference type="SMR" id="P55719"/>
<dbReference type="KEGG" id="rhi:NGR_a00620"/>
<dbReference type="eggNOG" id="COG1886">
    <property type="taxonomic scope" value="Bacteria"/>
</dbReference>
<dbReference type="HOGENOM" id="CLU_067306_0_0_5"/>
<dbReference type="OrthoDB" id="9801534at2"/>
<dbReference type="Proteomes" id="UP000001054">
    <property type="component" value="Plasmid pNGR234a"/>
</dbReference>
<dbReference type="GO" id="GO:0009425">
    <property type="term" value="C:bacterial-type flagellum basal body"/>
    <property type="evidence" value="ECO:0007669"/>
    <property type="project" value="InterPro"/>
</dbReference>
<dbReference type="GO" id="GO:0003774">
    <property type="term" value="F:cytoskeletal motor activity"/>
    <property type="evidence" value="ECO:0007669"/>
    <property type="project" value="InterPro"/>
</dbReference>
<dbReference type="GO" id="GO:0071978">
    <property type="term" value="P:bacterial-type flagellum-dependent swarming motility"/>
    <property type="evidence" value="ECO:0007669"/>
    <property type="project" value="TreeGrafter"/>
</dbReference>
<dbReference type="GO" id="GO:0050918">
    <property type="term" value="P:positive chemotaxis"/>
    <property type="evidence" value="ECO:0007669"/>
    <property type="project" value="TreeGrafter"/>
</dbReference>
<dbReference type="GO" id="GO:0030254">
    <property type="term" value="P:protein secretion by the type III secretion system"/>
    <property type="evidence" value="ECO:0007669"/>
    <property type="project" value="InterPro"/>
</dbReference>
<dbReference type="Gene3D" id="2.30.330.10">
    <property type="entry name" value="SpoA-like"/>
    <property type="match status" value="1"/>
</dbReference>
<dbReference type="InterPro" id="IPR001543">
    <property type="entry name" value="FliN-like_C"/>
</dbReference>
<dbReference type="InterPro" id="IPR001172">
    <property type="entry name" value="FliN_T3SS_HrcQb"/>
</dbReference>
<dbReference type="InterPro" id="IPR036429">
    <property type="entry name" value="SpoA-like_sf"/>
</dbReference>
<dbReference type="InterPro" id="IPR013385">
    <property type="entry name" value="T3SS_SpaO/YscQ/SpaO"/>
</dbReference>
<dbReference type="NCBIfam" id="TIGR02551">
    <property type="entry name" value="SpaO_YscQ"/>
    <property type="match status" value="1"/>
</dbReference>
<dbReference type="PANTHER" id="PTHR30034">
    <property type="entry name" value="FLAGELLAR MOTOR SWITCH PROTEIN FLIM"/>
    <property type="match status" value="1"/>
</dbReference>
<dbReference type="PANTHER" id="PTHR30034:SF6">
    <property type="entry name" value="YOP PROTEINS TRANSLOCATION PROTEIN Q"/>
    <property type="match status" value="1"/>
</dbReference>
<dbReference type="Pfam" id="PF01052">
    <property type="entry name" value="FliMN_C"/>
    <property type="match status" value="1"/>
</dbReference>
<dbReference type="PRINTS" id="PR00956">
    <property type="entry name" value="FLGMOTORFLIN"/>
</dbReference>
<dbReference type="SUPFAM" id="SSF101801">
    <property type="entry name" value="Surface presentation of antigens (SPOA)"/>
    <property type="match status" value="1"/>
</dbReference>
<keyword id="KW-0614">Plasmid</keyword>
<keyword id="KW-1185">Reference proteome</keyword>
<keyword id="KW-0813">Transport</keyword>
<reference key="1">
    <citation type="journal article" date="1997" name="Nature">
        <title>Molecular basis of symbiosis between Rhizobium and legumes.</title>
        <authorList>
            <person name="Freiberg C.A."/>
            <person name="Fellay R."/>
            <person name="Bairoch A."/>
            <person name="Broughton W.J."/>
            <person name="Rosenthal A."/>
            <person name="Perret X."/>
        </authorList>
    </citation>
    <scope>NUCLEOTIDE SEQUENCE [LARGE SCALE GENOMIC DNA]</scope>
    <source>
        <strain>NBRC 101917 / NGR234</strain>
    </source>
</reference>
<reference key="2">
    <citation type="journal article" date="2009" name="Appl. Environ. Microbiol.">
        <title>Rhizobium sp. strain NGR234 possesses a remarkable number of secretion systems.</title>
        <authorList>
            <person name="Schmeisser C."/>
            <person name="Liesegang H."/>
            <person name="Krysciak D."/>
            <person name="Bakkou N."/>
            <person name="Le Quere A."/>
            <person name="Wollherr A."/>
            <person name="Heinemeyer I."/>
            <person name="Morgenstern B."/>
            <person name="Pommerening-Roeser A."/>
            <person name="Flores M."/>
            <person name="Palacios R."/>
            <person name="Brenner S."/>
            <person name="Gottschalk G."/>
            <person name="Schmitz R.A."/>
            <person name="Broughton W.J."/>
            <person name="Perret X."/>
            <person name="Strittmatter A.W."/>
            <person name="Streit W.R."/>
        </authorList>
    </citation>
    <scope>NUCLEOTIDE SEQUENCE [LARGE SCALE GENOMIC DNA]</scope>
    <source>
        <strain>NBRC 101917 / NGR234</strain>
    </source>
</reference>
<feature type="chain" id="PRO_0000184132" description="Probable translocation protein Y4yK">
    <location>
        <begin position="1"/>
        <end position="358"/>
    </location>
</feature>
<geneLocation type="plasmid">
    <name>sym pNGR234a</name>
</geneLocation>
<proteinExistence type="inferred from homology"/>
<gene>
    <name type="ordered locus">NGR_a00620</name>
    <name type="ORF">y4yK</name>
</gene>
<evidence type="ECO:0000305" key="1"/>
<organism>
    <name type="scientific">Sinorhizobium fredii (strain NBRC 101917 / NGR234)</name>
    <dbReference type="NCBI Taxonomy" id="394"/>
    <lineage>
        <taxon>Bacteria</taxon>
        <taxon>Pseudomonadati</taxon>
        <taxon>Pseudomonadota</taxon>
        <taxon>Alphaproteobacteria</taxon>
        <taxon>Hyphomicrobiales</taxon>
        <taxon>Rhizobiaceae</taxon>
        <taxon>Sinorhizobium/Ensifer group</taxon>
        <taxon>Sinorhizobium</taxon>
    </lineage>
</organism>
<name>Y4YK_SINFN</name>
<protein>
    <recommendedName>
        <fullName>Probable translocation protein Y4yK</fullName>
    </recommendedName>
</protein>
<comment type="function">
    <text>Could be involved in the secretion of an unknown factor.</text>
</comment>
<comment type="similarity">
    <text evidence="1">Belongs to the FliN/MopA/SpaO family.</text>
</comment>
<sequence>MQLRSALMTGVARRTIFEPALTLSPEVVAWINDIAASRGPFQSRVGDKPLSVSMEGLVWQHESSAIPMFDCVWDLGGETVVLSLSRPLVEALVSTVQSGLAFPTEPTASLILELALEPLIARLEDKTNRTLHLLRVGKAITLAPYVELEIVIGPVSGKGRLFLFSPLDGLVPFAFRALAELLAQLPRQPRELSPELPVIIAGEIGTLRASAALLRKASVGDALLPDISPFGRGQIALSVGQLWTRADLEGDHLVLRGPFRPQSRPLECAHMTEIESQLRPSDADLDDIEIVLVFECGRWPISLGELRSAGDGHVFELGRPIDGLVDIVANGRCIGRGDIVRIGDDLGIRLRGRLACND</sequence>
<accession>P55719</accession>